<reference key="1">
    <citation type="submission" date="2007-02" db="EMBL/GenBank/DDBJ databases">
        <title>Complete sequence of chromosome of Yersinia pestis Pestoides F.</title>
        <authorList>
            <consortium name="US DOE Joint Genome Institute"/>
            <person name="Copeland A."/>
            <person name="Lucas S."/>
            <person name="Lapidus A."/>
            <person name="Barry K."/>
            <person name="Detter J.C."/>
            <person name="Glavina del Rio T."/>
            <person name="Hammon N."/>
            <person name="Israni S."/>
            <person name="Dalin E."/>
            <person name="Tice H."/>
            <person name="Pitluck S."/>
            <person name="Di Bartolo G."/>
            <person name="Chain P."/>
            <person name="Malfatti S."/>
            <person name="Shin M."/>
            <person name="Vergez L."/>
            <person name="Schmutz J."/>
            <person name="Larimer F."/>
            <person name="Land M."/>
            <person name="Hauser L."/>
            <person name="Worsham P."/>
            <person name="Chu M."/>
            <person name="Bearden S."/>
            <person name="Garcia E."/>
            <person name="Richardson P."/>
        </authorList>
    </citation>
    <scope>NUCLEOTIDE SEQUENCE [LARGE SCALE GENOMIC DNA]</scope>
    <source>
        <strain>Pestoides F</strain>
    </source>
</reference>
<proteinExistence type="inferred from homology"/>
<comment type="function">
    <text evidence="1">Catalyzes the oxidative demethylation of N-methyl-L-tryptophan.</text>
</comment>
<comment type="catalytic activity">
    <reaction evidence="1">
        <text>N(alpha)-methyl-L-tryptophan + O2 + H2O = L-tryptophan + formaldehyde + H2O2</text>
        <dbReference type="Rhea" id="RHEA:28006"/>
        <dbReference type="ChEBI" id="CHEBI:15377"/>
        <dbReference type="ChEBI" id="CHEBI:15379"/>
        <dbReference type="ChEBI" id="CHEBI:16240"/>
        <dbReference type="ChEBI" id="CHEBI:16842"/>
        <dbReference type="ChEBI" id="CHEBI:57283"/>
        <dbReference type="ChEBI" id="CHEBI:57912"/>
    </reaction>
</comment>
<comment type="cofactor">
    <cofactor evidence="1">
        <name>FAD</name>
        <dbReference type="ChEBI" id="CHEBI:57692"/>
    </cofactor>
    <text evidence="1">Binds 1 FAD per subunit.</text>
</comment>
<comment type="subunit">
    <text evidence="1">Monomer.</text>
</comment>
<comment type="similarity">
    <text evidence="1">Belongs to the MSOX/MTOX family. MTOX subfamily.</text>
</comment>
<feature type="chain" id="PRO_1000050795" description="N-methyl-L-tryptophan oxidase">
    <location>
        <begin position="1"/>
        <end position="371"/>
    </location>
</feature>
<feature type="binding site" evidence="1">
    <location>
        <begin position="4"/>
        <end position="34"/>
    </location>
    <ligand>
        <name>FAD</name>
        <dbReference type="ChEBI" id="CHEBI:57692"/>
    </ligand>
</feature>
<feature type="modified residue" description="S-8alpha-FAD cysteine" evidence="1">
    <location>
        <position position="307"/>
    </location>
</feature>
<evidence type="ECO:0000255" key="1">
    <source>
        <dbReference type="HAMAP-Rule" id="MF_00515"/>
    </source>
</evidence>
<organism>
    <name type="scientific">Yersinia pestis (strain Pestoides F)</name>
    <dbReference type="NCBI Taxonomy" id="386656"/>
    <lineage>
        <taxon>Bacteria</taxon>
        <taxon>Pseudomonadati</taxon>
        <taxon>Pseudomonadota</taxon>
        <taxon>Gammaproteobacteria</taxon>
        <taxon>Enterobacterales</taxon>
        <taxon>Yersiniaceae</taxon>
        <taxon>Yersinia</taxon>
    </lineage>
</organism>
<protein>
    <recommendedName>
        <fullName evidence="1">N-methyl-L-tryptophan oxidase</fullName>
        <shortName evidence="1">MTOX</shortName>
        <ecNumber evidence="1">1.5.3.-</ecNumber>
    </recommendedName>
</protein>
<gene>
    <name evidence="1" type="primary">solA</name>
    <name type="ordered locus">YPDSF_1863</name>
</gene>
<sequence>MDYDLIVIGSGSVGSAAGYYASQAGLNVLMIDSAMPPHQAGSHHGETRIMRHAYGEGEKYVPLVLRAQALWDQLAAQTGEKLFQACGVINLGPDNSTFLQNVQRSAQQYDLPVETLNSTQIREKWPVFTVPDNYIAVFEPQSGYLRSELAVKTLIKAVTEAGCGILFNCPVTAIESHQAGVDVVTIDGTYSATKVVVTAGTWVKELLPTLPVTPVRKVFSWHQADGRYSEANHFPAFTVEMPDNILYYGFPAQNDALKLGKHHGGQLIESAAQRKPFGRYAEDGTEVFSFLRHFLPGVGVCLRGEACSYDMSPDEDFIIDTLPEDERVMVVSGLSGHGFKFATALGEVAALFAQDKPSPIDISAFSLARFR</sequence>
<keyword id="KW-0274">FAD</keyword>
<keyword id="KW-0285">Flavoprotein</keyword>
<keyword id="KW-0560">Oxidoreductase</keyword>
<accession>A4TLT6</accession>
<name>MTOX_YERPP</name>
<dbReference type="EC" id="1.5.3.-" evidence="1"/>
<dbReference type="EMBL" id="CP000668">
    <property type="protein sequence ID" value="ABP40248.1"/>
    <property type="molecule type" value="Genomic_DNA"/>
</dbReference>
<dbReference type="RefSeq" id="WP_002211850.1">
    <property type="nucleotide sequence ID" value="NZ_CP009715.1"/>
</dbReference>
<dbReference type="SMR" id="A4TLT6"/>
<dbReference type="GeneID" id="57976231"/>
<dbReference type="KEGG" id="ypp:YPDSF_1863"/>
<dbReference type="PATRIC" id="fig|386656.14.peg.3318"/>
<dbReference type="GO" id="GO:0005829">
    <property type="term" value="C:cytosol"/>
    <property type="evidence" value="ECO:0007669"/>
    <property type="project" value="TreeGrafter"/>
</dbReference>
<dbReference type="GO" id="GO:0050660">
    <property type="term" value="F:flavin adenine dinucleotide binding"/>
    <property type="evidence" value="ECO:0007669"/>
    <property type="project" value="InterPro"/>
</dbReference>
<dbReference type="GO" id="GO:0050131">
    <property type="term" value="F:N-methyl-L-amino-acid oxidase activity"/>
    <property type="evidence" value="ECO:0007669"/>
    <property type="project" value="InterPro"/>
</dbReference>
<dbReference type="GO" id="GO:0008115">
    <property type="term" value="F:sarcosine oxidase activity"/>
    <property type="evidence" value="ECO:0007669"/>
    <property type="project" value="TreeGrafter"/>
</dbReference>
<dbReference type="Gene3D" id="3.30.9.10">
    <property type="entry name" value="D-Amino Acid Oxidase, subunit A, domain 2"/>
    <property type="match status" value="1"/>
</dbReference>
<dbReference type="Gene3D" id="3.50.50.60">
    <property type="entry name" value="FAD/NAD(P)-binding domain"/>
    <property type="match status" value="1"/>
</dbReference>
<dbReference type="HAMAP" id="MF_00515">
    <property type="entry name" value="MTOX"/>
    <property type="match status" value="1"/>
</dbReference>
<dbReference type="InterPro" id="IPR006076">
    <property type="entry name" value="FAD-dep_OxRdtase"/>
</dbReference>
<dbReference type="InterPro" id="IPR036188">
    <property type="entry name" value="FAD/NAD-bd_sf"/>
</dbReference>
<dbReference type="InterPro" id="IPR023493">
    <property type="entry name" value="Me_Trp_Oxase_MTOX"/>
</dbReference>
<dbReference type="InterPro" id="IPR045170">
    <property type="entry name" value="MTOX"/>
</dbReference>
<dbReference type="NCBIfam" id="NF008425">
    <property type="entry name" value="PRK11259.1"/>
    <property type="match status" value="1"/>
</dbReference>
<dbReference type="PANTHER" id="PTHR10961:SF7">
    <property type="entry name" value="FAD DEPENDENT OXIDOREDUCTASE DOMAIN-CONTAINING PROTEIN"/>
    <property type="match status" value="1"/>
</dbReference>
<dbReference type="PANTHER" id="PTHR10961">
    <property type="entry name" value="PEROXISOMAL SARCOSINE OXIDASE"/>
    <property type="match status" value="1"/>
</dbReference>
<dbReference type="Pfam" id="PF01266">
    <property type="entry name" value="DAO"/>
    <property type="match status" value="1"/>
</dbReference>
<dbReference type="SUPFAM" id="SSF54373">
    <property type="entry name" value="FAD-linked reductases, C-terminal domain"/>
    <property type="match status" value="1"/>
</dbReference>
<dbReference type="SUPFAM" id="SSF51905">
    <property type="entry name" value="FAD/NAD(P)-binding domain"/>
    <property type="match status" value="1"/>
</dbReference>